<accession>A7MZ64</accession>
<reference key="1">
    <citation type="submission" date="2007-08" db="EMBL/GenBank/DDBJ databases">
        <authorList>
            <consortium name="The Vibrio harveyi Genome Sequencing Project"/>
            <person name="Bassler B."/>
            <person name="Clifton S.W."/>
            <person name="Fulton L."/>
            <person name="Delehaunty K."/>
            <person name="Fronick C."/>
            <person name="Harrison M."/>
            <person name="Markivic C."/>
            <person name="Fulton R."/>
            <person name="Tin-Wollam A.-M."/>
            <person name="Shah N."/>
            <person name="Pepin K."/>
            <person name="Nash W."/>
            <person name="Thiruvilangam P."/>
            <person name="Bhonagiri V."/>
            <person name="Waters C."/>
            <person name="Tu K.C."/>
            <person name="Irgon J."/>
            <person name="Wilson R.K."/>
        </authorList>
    </citation>
    <scope>NUCLEOTIDE SEQUENCE [LARGE SCALE GENOMIC DNA]</scope>
    <source>
        <strain>ATCC BAA-1116 / BB120</strain>
    </source>
</reference>
<comment type="function">
    <text evidence="2">With S4 and S5 plays an important role in translational accuracy.</text>
</comment>
<comment type="function">
    <text evidence="2">Interacts with and stabilizes bases of the 16S rRNA that are involved in tRNA selection in the A site and with the mRNA backbone. Located at the interface of the 30S and 50S subunits, it traverses the body of the 30S subunit contacting proteins on the other side and probably holding the rRNA structure together. The combined cluster of proteins S8, S12 and S17 appears to hold together the shoulder and platform of the 30S subunit.</text>
</comment>
<comment type="subunit">
    <text evidence="2">Part of the 30S ribosomal subunit. Contacts proteins S8 and S17. May interact with IF1 in the 30S initiation complex.</text>
</comment>
<comment type="similarity">
    <text evidence="2">Belongs to the universal ribosomal protein uS12 family.</text>
</comment>
<evidence type="ECO:0000250" key="1"/>
<evidence type="ECO:0000255" key="2">
    <source>
        <dbReference type="HAMAP-Rule" id="MF_00403"/>
    </source>
</evidence>
<evidence type="ECO:0000305" key="3"/>
<feature type="chain" id="PRO_1000049819" description="Small ribosomal subunit protein uS12">
    <location>
        <begin position="1"/>
        <end position="124"/>
    </location>
</feature>
<feature type="modified residue" description="3-methylthioaspartic acid" evidence="1">
    <location>
        <position position="89"/>
    </location>
</feature>
<gene>
    <name evidence="2" type="primary">rpsL</name>
    <name type="ordered locus">VIBHAR_00057</name>
</gene>
<keyword id="KW-0488">Methylation</keyword>
<keyword id="KW-0687">Ribonucleoprotein</keyword>
<keyword id="KW-0689">Ribosomal protein</keyword>
<keyword id="KW-0694">RNA-binding</keyword>
<keyword id="KW-0699">rRNA-binding</keyword>
<keyword id="KW-0820">tRNA-binding</keyword>
<protein>
    <recommendedName>
        <fullName evidence="2">Small ribosomal subunit protein uS12</fullName>
    </recommendedName>
    <alternativeName>
        <fullName evidence="3">30S ribosomal protein S12</fullName>
    </alternativeName>
</protein>
<proteinExistence type="inferred from homology"/>
<sequence>MATINQLVRKPRAKQVVKSNVPALEACPQKRGVCTRVYTTTPKKPNSALRKVCRVRLTNGFEVTSYIGGEGHNLQEHSVVLIRGGRVKDLPGVRYHTVRGALDCAGVNDRKQGRSKYGVKRPKS</sequence>
<dbReference type="EMBL" id="CP000789">
    <property type="protein sequence ID" value="ABU69117.1"/>
    <property type="molecule type" value="Genomic_DNA"/>
</dbReference>
<dbReference type="RefSeq" id="WP_004399892.1">
    <property type="nucleotide sequence ID" value="NC_022269.1"/>
</dbReference>
<dbReference type="SMR" id="A7MZ64"/>
<dbReference type="GeneID" id="97539791"/>
<dbReference type="KEGG" id="vha:VIBHAR_00057"/>
<dbReference type="PATRIC" id="fig|338187.25.peg.2466"/>
<dbReference type="Proteomes" id="UP000008152">
    <property type="component" value="Chromosome I"/>
</dbReference>
<dbReference type="GO" id="GO:0015935">
    <property type="term" value="C:small ribosomal subunit"/>
    <property type="evidence" value="ECO:0007669"/>
    <property type="project" value="InterPro"/>
</dbReference>
<dbReference type="GO" id="GO:0019843">
    <property type="term" value="F:rRNA binding"/>
    <property type="evidence" value="ECO:0007669"/>
    <property type="project" value="UniProtKB-UniRule"/>
</dbReference>
<dbReference type="GO" id="GO:0003735">
    <property type="term" value="F:structural constituent of ribosome"/>
    <property type="evidence" value="ECO:0007669"/>
    <property type="project" value="InterPro"/>
</dbReference>
<dbReference type="GO" id="GO:0000049">
    <property type="term" value="F:tRNA binding"/>
    <property type="evidence" value="ECO:0007669"/>
    <property type="project" value="UniProtKB-UniRule"/>
</dbReference>
<dbReference type="GO" id="GO:0006412">
    <property type="term" value="P:translation"/>
    <property type="evidence" value="ECO:0007669"/>
    <property type="project" value="UniProtKB-UniRule"/>
</dbReference>
<dbReference type="CDD" id="cd03368">
    <property type="entry name" value="Ribosomal_S12"/>
    <property type="match status" value="1"/>
</dbReference>
<dbReference type="FunFam" id="2.40.50.140:FF:000001">
    <property type="entry name" value="30S ribosomal protein S12"/>
    <property type="match status" value="1"/>
</dbReference>
<dbReference type="Gene3D" id="2.40.50.140">
    <property type="entry name" value="Nucleic acid-binding proteins"/>
    <property type="match status" value="1"/>
</dbReference>
<dbReference type="HAMAP" id="MF_00403_B">
    <property type="entry name" value="Ribosomal_uS12_B"/>
    <property type="match status" value="1"/>
</dbReference>
<dbReference type="InterPro" id="IPR012340">
    <property type="entry name" value="NA-bd_OB-fold"/>
</dbReference>
<dbReference type="InterPro" id="IPR006032">
    <property type="entry name" value="Ribosomal_uS12"/>
</dbReference>
<dbReference type="InterPro" id="IPR005679">
    <property type="entry name" value="Ribosomal_uS12_bac"/>
</dbReference>
<dbReference type="NCBIfam" id="TIGR00981">
    <property type="entry name" value="rpsL_bact"/>
    <property type="match status" value="1"/>
</dbReference>
<dbReference type="PANTHER" id="PTHR11652">
    <property type="entry name" value="30S RIBOSOMAL PROTEIN S12 FAMILY MEMBER"/>
    <property type="match status" value="1"/>
</dbReference>
<dbReference type="Pfam" id="PF00164">
    <property type="entry name" value="Ribosom_S12_S23"/>
    <property type="match status" value="1"/>
</dbReference>
<dbReference type="PIRSF" id="PIRSF002133">
    <property type="entry name" value="Ribosomal_S12/S23"/>
    <property type="match status" value="1"/>
</dbReference>
<dbReference type="PRINTS" id="PR01034">
    <property type="entry name" value="RIBOSOMALS12"/>
</dbReference>
<dbReference type="SUPFAM" id="SSF50249">
    <property type="entry name" value="Nucleic acid-binding proteins"/>
    <property type="match status" value="1"/>
</dbReference>
<dbReference type="PROSITE" id="PS00055">
    <property type="entry name" value="RIBOSOMAL_S12"/>
    <property type="match status" value="1"/>
</dbReference>
<name>RS12_VIBC1</name>
<organism>
    <name type="scientific">Vibrio campbellii (strain ATCC BAA-1116)</name>
    <dbReference type="NCBI Taxonomy" id="2902295"/>
    <lineage>
        <taxon>Bacteria</taxon>
        <taxon>Pseudomonadati</taxon>
        <taxon>Pseudomonadota</taxon>
        <taxon>Gammaproteobacteria</taxon>
        <taxon>Vibrionales</taxon>
        <taxon>Vibrionaceae</taxon>
        <taxon>Vibrio</taxon>
    </lineage>
</organism>